<name>ERA_CAMJJ</name>
<proteinExistence type="inferred from homology"/>
<reference key="1">
    <citation type="submission" date="2006-12" db="EMBL/GenBank/DDBJ databases">
        <authorList>
            <person name="Fouts D.E."/>
            <person name="Nelson K.E."/>
            <person name="Sebastian Y."/>
        </authorList>
    </citation>
    <scope>NUCLEOTIDE SEQUENCE [LARGE SCALE GENOMIC DNA]</scope>
    <source>
        <strain>81-176</strain>
    </source>
</reference>
<evidence type="ECO:0000255" key="1">
    <source>
        <dbReference type="HAMAP-Rule" id="MF_00367"/>
    </source>
</evidence>
<evidence type="ECO:0000255" key="2">
    <source>
        <dbReference type="PROSITE-ProRule" id="PRU01050"/>
    </source>
</evidence>
<sequence length="291" mass="33100">MKSGFVSIIGRTNAGKSTLINSLLEEKIALVSHKQNATRRKIKAIVMHEKNQIIFIDTPGLHESGATLNQLLVQSAIKSIGDCDVILFVASVFDSTKDYENFLSLNPQVPHIIALNKVDLTDNATLLKKLSEYAKFSQHFKAIIPYSSKKKSYKKGLLDEIVKYLDEHEYFYDPEFLSASSEKELYRDFILESIYENLSDELPYSSEVLINRTKDTPNLLILEANIITDTNSHKGMLIGKEGATLKRIGKDARFKISKLAQKKVLLKLFVTVKKNWQKDEEFLKKLLNDEN</sequence>
<organism>
    <name type="scientific">Campylobacter jejuni subsp. jejuni serotype O:23/36 (strain 81-176)</name>
    <dbReference type="NCBI Taxonomy" id="354242"/>
    <lineage>
        <taxon>Bacteria</taxon>
        <taxon>Pseudomonadati</taxon>
        <taxon>Campylobacterota</taxon>
        <taxon>Epsilonproteobacteria</taxon>
        <taxon>Campylobacterales</taxon>
        <taxon>Campylobacteraceae</taxon>
        <taxon>Campylobacter</taxon>
    </lineage>
</organism>
<keyword id="KW-0997">Cell inner membrane</keyword>
<keyword id="KW-1003">Cell membrane</keyword>
<keyword id="KW-0963">Cytoplasm</keyword>
<keyword id="KW-0342">GTP-binding</keyword>
<keyword id="KW-0472">Membrane</keyword>
<keyword id="KW-0547">Nucleotide-binding</keyword>
<keyword id="KW-0690">Ribosome biogenesis</keyword>
<keyword id="KW-0694">RNA-binding</keyword>
<keyword id="KW-0699">rRNA-binding</keyword>
<feature type="chain" id="PRO_1000079668" description="GTPase Era">
    <location>
        <begin position="1"/>
        <end position="291"/>
    </location>
</feature>
<feature type="domain" description="Era-type G" evidence="2">
    <location>
        <begin position="2"/>
        <end position="167"/>
    </location>
</feature>
<feature type="domain" description="KH type-2" evidence="1">
    <location>
        <begin position="186"/>
        <end position="274"/>
    </location>
</feature>
<feature type="region of interest" description="G1" evidence="2">
    <location>
        <begin position="10"/>
        <end position="17"/>
    </location>
</feature>
<feature type="region of interest" description="G2" evidence="2">
    <location>
        <begin position="36"/>
        <end position="40"/>
    </location>
</feature>
<feature type="region of interest" description="G3" evidence="2">
    <location>
        <begin position="57"/>
        <end position="60"/>
    </location>
</feature>
<feature type="region of interest" description="G4" evidence="2">
    <location>
        <begin position="116"/>
        <end position="119"/>
    </location>
</feature>
<feature type="region of interest" description="G5" evidence="2">
    <location>
        <begin position="146"/>
        <end position="148"/>
    </location>
</feature>
<feature type="binding site" evidence="1">
    <location>
        <begin position="10"/>
        <end position="17"/>
    </location>
    <ligand>
        <name>GTP</name>
        <dbReference type="ChEBI" id="CHEBI:37565"/>
    </ligand>
</feature>
<feature type="binding site" evidence="1">
    <location>
        <begin position="57"/>
        <end position="61"/>
    </location>
    <ligand>
        <name>GTP</name>
        <dbReference type="ChEBI" id="CHEBI:37565"/>
    </ligand>
</feature>
<feature type="binding site" evidence="1">
    <location>
        <begin position="116"/>
        <end position="119"/>
    </location>
    <ligand>
        <name>GTP</name>
        <dbReference type="ChEBI" id="CHEBI:37565"/>
    </ligand>
</feature>
<gene>
    <name evidence="1" type="primary">era</name>
    <name type="ordered locus">CJJ81176_0688</name>
</gene>
<accession>A1VZ20</accession>
<comment type="function">
    <text evidence="1">An essential GTPase that binds both GDP and GTP, with rapid nucleotide exchange. Plays a role in 16S rRNA processing and 30S ribosomal subunit biogenesis and possibly also in cell cycle regulation and energy metabolism.</text>
</comment>
<comment type="subunit">
    <text evidence="1">Monomer.</text>
</comment>
<comment type="subcellular location">
    <subcellularLocation>
        <location>Cytoplasm</location>
    </subcellularLocation>
    <subcellularLocation>
        <location evidence="1">Cell inner membrane</location>
        <topology evidence="1">Peripheral membrane protein</topology>
    </subcellularLocation>
</comment>
<comment type="similarity">
    <text evidence="1 2">Belongs to the TRAFAC class TrmE-Era-EngA-EngB-Septin-like GTPase superfamily. Era GTPase family.</text>
</comment>
<protein>
    <recommendedName>
        <fullName evidence="1">GTPase Era</fullName>
    </recommendedName>
</protein>
<dbReference type="EMBL" id="CP000538">
    <property type="protein sequence ID" value="EAQ72405.1"/>
    <property type="molecule type" value="Genomic_DNA"/>
</dbReference>
<dbReference type="RefSeq" id="WP_002855233.1">
    <property type="nucleotide sequence ID" value="NC_008787.1"/>
</dbReference>
<dbReference type="SMR" id="A1VZ20"/>
<dbReference type="KEGG" id="cjj:CJJ81176_0688"/>
<dbReference type="eggNOG" id="COG1159">
    <property type="taxonomic scope" value="Bacteria"/>
</dbReference>
<dbReference type="HOGENOM" id="CLU_038009_1_0_7"/>
<dbReference type="Proteomes" id="UP000000646">
    <property type="component" value="Chromosome"/>
</dbReference>
<dbReference type="GO" id="GO:0005829">
    <property type="term" value="C:cytosol"/>
    <property type="evidence" value="ECO:0007669"/>
    <property type="project" value="TreeGrafter"/>
</dbReference>
<dbReference type="GO" id="GO:0005886">
    <property type="term" value="C:plasma membrane"/>
    <property type="evidence" value="ECO:0007669"/>
    <property type="project" value="UniProtKB-SubCell"/>
</dbReference>
<dbReference type="GO" id="GO:0005525">
    <property type="term" value="F:GTP binding"/>
    <property type="evidence" value="ECO:0007669"/>
    <property type="project" value="UniProtKB-UniRule"/>
</dbReference>
<dbReference type="GO" id="GO:0003924">
    <property type="term" value="F:GTPase activity"/>
    <property type="evidence" value="ECO:0007669"/>
    <property type="project" value="UniProtKB-UniRule"/>
</dbReference>
<dbReference type="GO" id="GO:0043024">
    <property type="term" value="F:ribosomal small subunit binding"/>
    <property type="evidence" value="ECO:0007669"/>
    <property type="project" value="TreeGrafter"/>
</dbReference>
<dbReference type="GO" id="GO:0070181">
    <property type="term" value="F:small ribosomal subunit rRNA binding"/>
    <property type="evidence" value="ECO:0007669"/>
    <property type="project" value="UniProtKB-UniRule"/>
</dbReference>
<dbReference type="GO" id="GO:0000028">
    <property type="term" value="P:ribosomal small subunit assembly"/>
    <property type="evidence" value="ECO:0007669"/>
    <property type="project" value="TreeGrafter"/>
</dbReference>
<dbReference type="CDD" id="cd04163">
    <property type="entry name" value="Era"/>
    <property type="match status" value="1"/>
</dbReference>
<dbReference type="CDD" id="cd22534">
    <property type="entry name" value="KH-II_Era"/>
    <property type="match status" value="1"/>
</dbReference>
<dbReference type="Gene3D" id="3.30.300.20">
    <property type="match status" value="1"/>
</dbReference>
<dbReference type="Gene3D" id="3.40.50.300">
    <property type="entry name" value="P-loop containing nucleotide triphosphate hydrolases"/>
    <property type="match status" value="1"/>
</dbReference>
<dbReference type="HAMAP" id="MF_00367">
    <property type="entry name" value="GTPase_Era"/>
    <property type="match status" value="1"/>
</dbReference>
<dbReference type="InterPro" id="IPR030388">
    <property type="entry name" value="G_ERA_dom"/>
</dbReference>
<dbReference type="InterPro" id="IPR006073">
    <property type="entry name" value="GTP-bd"/>
</dbReference>
<dbReference type="InterPro" id="IPR005662">
    <property type="entry name" value="GTPase_Era-like"/>
</dbReference>
<dbReference type="InterPro" id="IPR015946">
    <property type="entry name" value="KH_dom-like_a/b"/>
</dbReference>
<dbReference type="InterPro" id="IPR004044">
    <property type="entry name" value="KH_dom_type_2"/>
</dbReference>
<dbReference type="InterPro" id="IPR009019">
    <property type="entry name" value="KH_sf_prok-type"/>
</dbReference>
<dbReference type="InterPro" id="IPR027417">
    <property type="entry name" value="P-loop_NTPase"/>
</dbReference>
<dbReference type="InterPro" id="IPR005225">
    <property type="entry name" value="Small_GTP-bd"/>
</dbReference>
<dbReference type="NCBIfam" id="TIGR00436">
    <property type="entry name" value="era"/>
    <property type="match status" value="1"/>
</dbReference>
<dbReference type="NCBIfam" id="NF000908">
    <property type="entry name" value="PRK00089.1"/>
    <property type="match status" value="1"/>
</dbReference>
<dbReference type="NCBIfam" id="TIGR00231">
    <property type="entry name" value="small_GTP"/>
    <property type="match status" value="1"/>
</dbReference>
<dbReference type="PANTHER" id="PTHR42698">
    <property type="entry name" value="GTPASE ERA"/>
    <property type="match status" value="1"/>
</dbReference>
<dbReference type="PANTHER" id="PTHR42698:SF1">
    <property type="entry name" value="GTPASE ERA, MITOCHONDRIAL"/>
    <property type="match status" value="1"/>
</dbReference>
<dbReference type="Pfam" id="PF07650">
    <property type="entry name" value="KH_2"/>
    <property type="match status" value="1"/>
</dbReference>
<dbReference type="Pfam" id="PF01926">
    <property type="entry name" value="MMR_HSR1"/>
    <property type="match status" value="1"/>
</dbReference>
<dbReference type="SUPFAM" id="SSF52540">
    <property type="entry name" value="P-loop containing nucleoside triphosphate hydrolases"/>
    <property type="match status" value="1"/>
</dbReference>
<dbReference type="SUPFAM" id="SSF54814">
    <property type="entry name" value="Prokaryotic type KH domain (KH-domain type II)"/>
    <property type="match status" value="1"/>
</dbReference>
<dbReference type="PROSITE" id="PS51713">
    <property type="entry name" value="G_ERA"/>
    <property type="match status" value="1"/>
</dbReference>
<dbReference type="PROSITE" id="PS50823">
    <property type="entry name" value="KH_TYPE_2"/>
    <property type="match status" value="1"/>
</dbReference>